<comment type="function">
    <text evidence="1">RNA chaperone with significant RNA binding, RNA strand exchange and RNA duplexing activities. May regulate ProP activity through an RNA-based, post-transcriptional mechanism.</text>
</comment>
<comment type="subcellular location">
    <subcellularLocation>
        <location evidence="1">Cytoplasm</location>
    </subcellularLocation>
</comment>
<comment type="similarity">
    <text evidence="1">Belongs to the ProQ family.</text>
</comment>
<dbReference type="EMBL" id="CP000308">
    <property type="protein sequence ID" value="ABG13783.1"/>
    <property type="molecule type" value="Genomic_DNA"/>
</dbReference>
<dbReference type="RefSeq" id="WP_002210849.1">
    <property type="nucleotide sequence ID" value="NZ_CP009906.1"/>
</dbReference>
<dbReference type="SMR" id="Q1C6Y9"/>
<dbReference type="GeneID" id="96665860"/>
<dbReference type="KEGG" id="ypa:YPA_1817"/>
<dbReference type="Proteomes" id="UP000001971">
    <property type="component" value="Chromosome"/>
</dbReference>
<dbReference type="GO" id="GO:0005829">
    <property type="term" value="C:cytosol"/>
    <property type="evidence" value="ECO:0007669"/>
    <property type="project" value="TreeGrafter"/>
</dbReference>
<dbReference type="GO" id="GO:0033592">
    <property type="term" value="F:RNA strand annealing activity"/>
    <property type="evidence" value="ECO:0007669"/>
    <property type="project" value="UniProtKB-UniRule"/>
</dbReference>
<dbReference type="GO" id="GO:0034057">
    <property type="term" value="F:RNA strand-exchange activity"/>
    <property type="evidence" value="ECO:0007669"/>
    <property type="project" value="UniProtKB-UniRule"/>
</dbReference>
<dbReference type="GO" id="GO:0010608">
    <property type="term" value="P:post-transcriptional regulation of gene expression"/>
    <property type="evidence" value="ECO:0007669"/>
    <property type="project" value="InterPro"/>
</dbReference>
<dbReference type="FunFam" id="1.10.1710.10:FF:000001">
    <property type="entry name" value="RNA chaperone ProQ"/>
    <property type="match status" value="1"/>
</dbReference>
<dbReference type="Gene3D" id="1.10.1710.10">
    <property type="entry name" value="ProQ/FinO domain"/>
    <property type="match status" value="1"/>
</dbReference>
<dbReference type="HAMAP" id="MF_00749">
    <property type="entry name" value="ProQ"/>
    <property type="match status" value="1"/>
</dbReference>
<dbReference type="InterPro" id="IPR023529">
    <property type="entry name" value="ProQ"/>
</dbReference>
<dbReference type="InterPro" id="IPR016103">
    <property type="entry name" value="ProQ/FinO"/>
</dbReference>
<dbReference type="InterPro" id="IPR036442">
    <property type="entry name" value="ProQ/FinO_sf"/>
</dbReference>
<dbReference type="InterPro" id="IPR035236">
    <property type="entry name" value="ProQ_C"/>
</dbReference>
<dbReference type="NCBIfam" id="NF003434">
    <property type="entry name" value="PRK04950.1"/>
    <property type="match status" value="1"/>
</dbReference>
<dbReference type="PANTHER" id="PTHR38106">
    <property type="entry name" value="RNA CHAPERONE PROQ"/>
    <property type="match status" value="1"/>
</dbReference>
<dbReference type="PANTHER" id="PTHR38106:SF1">
    <property type="entry name" value="RNA CHAPERONE PROQ"/>
    <property type="match status" value="1"/>
</dbReference>
<dbReference type="Pfam" id="PF04352">
    <property type="entry name" value="ProQ"/>
    <property type="match status" value="1"/>
</dbReference>
<dbReference type="Pfam" id="PF17516">
    <property type="entry name" value="ProQ_C"/>
    <property type="match status" value="1"/>
</dbReference>
<dbReference type="SMART" id="SM00945">
    <property type="entry name" value="ProQ"/>
    <property type="match status" value="1"/>
</dbReference>
<dbReference type="SUPFAM" id="SSF48657">
    <property type="entry name" value="FinO-like"/>
    <property type="match status" value="1"/>
</dbReference>
<proteinExistence type="inferred from homology"/>
<evidence type="ECO:0000255" key="1">
    <source>
        <dbReference type="HAMAP-Rule" id="MF_00749"/>
    </source>
</evidence>
<evidence type="ECO:0000256" key="2">
    <source>
        <dbReference type="SAM" id="MobiDB-lite"/>
    </source>
</evidence>
<protein>
    <recommendedName>
        <fullName evidence="1">RNA chaperone ProQ</fullName>
    </recommendedName>
</protein>
<name>PROQ_YERPA</name>
<keyword id="KW-0143">Chaperone</keyword>
<keyword id="KW-0963">Cytoplasm</keyword>
<keyword id="KW-0694">RNA-binding</keyword>
<feature type="chain" id="PRO_0000303104" description="RNA chaperone ProQ">
    <location>
        <begin position="1"/>
        <end position="237"/>
    </location>
</feature>
<feature type="region of interest" description="Disordered" evidence="2">
    <location>
        <begin position="106"/>
        <end position="188"/>
    </location>
</feature>
<feature type="compositionally biased region" description="Basic and acidic residues" evidence="2">
    <location>
        <begin position="146"/>
        <end position="158"/>
    </location>
</feature>
<organism>
    <name type="scientific">Yersinia pestis bv. Antiqua (strain Antiqua)</name>
    <dbReference type="NCBI Taxonomy" id="360102"/>
    <lineage>
        <taxon>Bacteria</taxon>
        <taxon>Pseudomonadati</taxon>
        <taxon>Pseudomonadota</taxon>
        <taxon>Gammaproteobacteria</taxon>
        <taxon>Enterobacterales</taxon>
        <taxon>Yersiniaceae</taxon>
        <taxon>Yersinia</taxon>
    </lineage>
</organism>
<accession>Q1C6Y9</accession>
<sequence length="237" mass="26498">MENQPKLNSSKEVIAFLAERFPLCFTAEGEARPLKIGIFQDLVERVQGEENLSKTQLRSALRLYTSSWRYLYGVKVGAERVDLDGNPCGVLEEQHVEHARKQLEEAKARVQAQRAEQQAKKREAAIAAGETPEPRRPRPAGKKPAPRREAGAAPENRKPRQSPRPQQVRPPRPQVEENQPRPVPVTDISKLQIGQEIKVRAGKSAMDATVLEIAKDGVRVQLSSGLAMIVRAEHLQF</sequence>
<reference key="1">
    <citation type="journal article" date="2006" name="J. Bacteriol.">
        <title>Complete genome sequence of Yersinia pestis strains Antiqua and Nepal516: evidence of gene reduction in an emerging pathogen.</title>
        <authorList>
            <person name="Chain P.S.G."/>
            <person name="Hu P."/>
            <person name="Malfatti S.A."/>
            <person name="Radnedge L."/>
            <person name="Larimer F."/>
            <person name="Vergez L.M."/>
            <person name="Worsham P."/>
            <person name="Chu M.C."/>
            <person name="Andersen G.L."/>
        </authorList>
    </citation>
    <scope>NUCLEOTIDE SEQUENCE [LARGE SCALE GENOMIC DNA]</scope>
    <source>
        <strain>Antiqua</strain>
    </source>
</reference>
<gene>
    <name evidence="1" type="primary">proQ</name>
    <name type="ordered locus">YPA_1817</name>
</gene>